<gene>
    <name type="ORF">AGAP006607</name>
</gene>
<sequence>MKPLMLQGHQRAITQIKYNREGDLIFSSAKDSKPSVWYSLNGERLGTFNGHIGAVWCVDVDWTTTRLITGAGDMNTFLWDVETGTALGKIPCNSSVRTCNFSFSGNQASYSTDRAMNHPCELFVIDVRNIDASISSADPVLKLTMNEQQSKITSMLWGALDETVITGHENGSLRIWDLRAVKELNSVNDHTASITDMQMSSDGTMFVSSSKDCSAKLFDSDSLMCLKTFKTERPVNSACISPLFEHVALGGGQDAMEVTTTSTQAGKFDSRFFHLVYEEEFARVKGHFGPINSMAFHPDGKSFATGGEDGFVRLQVFDSSYYEHTFE</sequence>
<feature type="chain" id="PRO_0000365339" description="Eukaryotic translation initiation factor 3 subunit I">
    <location>
        <begin position="1"/>
        <end position="327"/>
    </location>
</feature>
<feature type="repeat" description="WD 1">
    <location>
        <begin position="8"/>
        <end position="47"/>
    </location>
</feature>
<feature type="repeat" description="WD 2">
    <location>
        <begin position="50"/>
        <end position="89"/>
    </location>
</feature>
<feature type="repeat" description="WD 3">
    <location>
        <begin position="147"/>
        <end position="186"/>
    </location>
</feature>
<feature type="repeat" description="WD 4">
    <location>
        <begin position="189"/>
        <end position="228"/>
    </location>
</feature>
<feature type="repeat" description="WD 5">
    <location>
        <begin position="286"/>
        <end position="327"/>
    </location>
</feature>
<protein>
    <recommendedName>
        <fullName evidence="1">Eukaryotic translation initiation factor 3 subunit I</fullName>
        <shortName evidence="1">eIF3i</shortName>
    </recommendedName>
</protein>
<name>EIF3I_ANOGA</name>
<dbReference type="EMBL" id="AAAB01008960">
    <property type="protein sequence ID" value="EAA10908.5"/>
    <property type="molecule type" value="Genomic_DNA"/>
</dbReference>
<dbReference type="SMR" id="Q7PP77"/>
<dbReference type="FunCoup" id="Q7PP77">
    <property type="interactions" value="1692"/>
</dbReference>
<dbReference type="STRING" id="7165.Q7PP77"/>
<dbReference type="PaxDb" id="7165-AGAP006607-PA"/>
<dbReference type="EnsemblMetazoa" id="AGAP006607-RA">
    <property type="protein sequence ID" value="AGAP006607-PA"/>
    <property type="gene ID" value="AGAP006607"/>
</dbReference>
<dbReference type="GeneID" id="1277192"/>
<dbReference type="KEGG" id="aga:1277192"/>
<dbReference type="CTD" id="8668"/>
<dbReference type="VEuPathDB" id="VectorBase:AGAMI1_004030"/>
<dbReference type="VEuPathDB" id="VectorBase:AGAP006607"/>
<dbReference type="eggNOG" id="KOG0643">
    <property type="taxonomic scope" value="Eukaryota"/>
</dbReference>
<dbReference type="HOGENOM" id="CLU_043845_0_1_1"/>
<dbReference type="InParanoid" id="Q7PP77"/>
<dbReference type="PhylomeDB" id="Q7PP77"/>
<dbReference type="Proteomes" id="UP000007062">
    <property type="component" value="Chromosome 2L"/>
</dbReference>
<dbReference type="GO" id="GO:0016282">
    <property type="term" value="C:eukaryotic 43S preinitiation complex"/>
    <property type="evidence" value="ECO:0007669"/>
    <property type="project" value="UniProtKB-UniRule"/>
</dbReference>
<dbReference type="GO" id="GO:0033290">
    <property type="term" value="C:eukaryotic 48S preinitiation complex"/>
    <property type="evidence" value="ECO:0007669"/>
    <property type="project" value="UniProtKB-UniRule"/>
</dbReference>
<dbReference type="GO" id="GO:0071541">
    <property type="term" value="C:eukaryotic translation initiation factor 3 complex, eIF3m"/>
    <property type="evidence" value="ECO:0000318"/>
    <property type="project" value="GO_Central"/>
</dbReference>
<dbReference type="GO" id="GO:0003723">
    <property type="term" value="F:RNA binding"/>
    <property type="evidence" value="ECO:0000318"/>
    <property type="project" value="GO_Central"/>
</dbReference>
<dbReference type="GO" id="GO:0003743">
    <property type="term" value="F:translation initiation factor activity"/>
    <property type="evidence" value="ECO:0000318"/>
    <property type="project" value="GO_Central"/>
</dbReference>
<dbReference type="GO" id="GO:0002183">
    <property type="term" value="P:cytoplasmic translational initiation"/>
    <property type="evidence" value="ECO:0000318"/>
    <property type="project" value="GO_Central"/>
</dbReference>
<dbReference type="GO" id="GO:0001732">
    <property type="term" value="P:formation of cytoplasmic translation initiation complex"/>
    <property type="evidence" value="ECO:0007669"/>
    <property type="project" value="UniProtKB-UniRule"/>
</dbReference>
<dbReference type="FunFam" id="2.130.10.10:FF:000127">
    <property type="entry name" value="Eukaryotic translation initiation factor 3 subunit I"/>
    <property type="match status" value="1"/>
</dbReference>
<dbReference type="Gene3D" id="2.130.10.10">
    <property type="entry name" value="YVTN repeat-like/Quinoprotein amine dehydrogenase"/>
    <property type="match status" value="1"/>
</dbReference>
<dbReference type="HAMAP" id="MF_03008">
    <property type="entry name" value="eIF3i"/>
    <property type="match status" value="1"/>
</dbReference>
<dbReference type="InterPro" id="IPR027525">
    <property type="entry name" value="eIF3i"/>
</dbReference>
<dbReference type="InterPro" id="IPR015943">
    <property type="entry name" value="WD40/YVTN_repeat-like_dom_sf"/>
</dbReference>
<dbReference type="InterPro" id="IPR019775">
    <property type="entry name" value="WD40_repeat_CS"/>
</dbReference>
<dbReference type="InterPro" id="IPR036322">
    <property type="entry name" value="WD40_repeat_dom_sf"/>
</dbReference>
<dbReference type="InterPro" id="IPR001680">
    <property type="entry name" value="WD40_rpt"/>
</dbReference>
<dbReference type="PANTHER" id="PTHR19877">
    <property type="entry name" value="EUKARYOTIC TRANSLATION INITIATION FACTOR 3 SUBUNIT I"/>
    <property type="match status" value="1"/>
</dbReference>
<dbReference type="PANTHER" id="PTHR19877:SF1">
    <property type="entry name" value="EUKARYOTIC TRANSLATION INITIATION FACTOR 3 SUBUNIT I"/>
    <property type="match status" value="1"/>
</dbReference>
<dbReference type="Pfam" id="PF24805">
    <property type="entry name" value="EIF3I"/>
    <property type="match status" value="1"/>
</dbReference>
<dbReference type="SMART" id="SM00320">
    <property type="entry name" value="WD40"/>
    <property type="match status" value="6"/>
</dbReference>
<dbReference type="SUPFAM" id="SSF50978">
    <property type="entry name" value="WD40 repeat-like"/>
    <property type="match status" value="1"/>
</dbReference>
<dbReference type="PROSITE" id="PS00678">
    <property type="entry name" value="WD_REPEATS_1"/>
    <property type="match status" value="2"/>
</dbReference>
<dbReference type="PROSITE" id="PS50082">
    <property type="entry name" value="WD_REPEATS_2"/>
    <property type="match status" value="5"/>
</dbReference>
<dbReference type="PROSITE" id="PS50294">
    <property type="entry name" value="WD_REPEATS_REGION"/>
    <property type="match status" value="2"/>
</dbReference>
<keyword id="KW-0963">Cytoplasm</keyword>
<keyword id="KW-0396">Initiation factor</keyword>
<keyword id="KW-0648">Protein biosynthesis</keyword>
<keyword id="KW-1185">Reference proteome</keyword>
<keyword id="KW-0677">Repeat</keyword>
<keyword id="KW-0853">WD repeat</keyword>
<reference key="1">
    <citation type="journal article" date="2002" name="Science">
        <title>The genome sequence of the malaria mosquito Anopheles gambiae.</title>
        <authorList>
            <person name="Holt R.A."/>
            <person name="Subramanian G.M."/>
            <person name="Halpern A."/>
            <person name="Sutton G.G."/>
            <person name="Charlab R."/>
            <person name="Nusskern D.R."/>
            <person name="Wincker P."/>
            <person name="Clark A.G."/>
            <person name="Ribeiro J.M.C."/>
            <person name="Wides R."/>
            <person name="Salzberg S.L."/>
            <person name="Loftus B.J."/>
            <person name="Yandell M.D."/>
            <person name="Majoros W.H."/>
            <person name="Rusch D.B."/>
            <person name="Lai Z."/>
            <person name="Kraft C.L."/>
            <person name="Abril J.F."/>
            <person name="Anthouard V."/>
            <person name="Arensburger P."/>
            <person name="Atkinson P.W."/>
            <person name="Baden H."/>
            <person name="de Berardinis V."/>
            <person name="Baldwin D."/>
            <person name="Benes V."/>
            <person name="Biedler J."/>
            <person name="Blass C."/>
            <person name="Bolanos R."/>
            <person name="Boscus D."/>
            <person name="Barnstead M."/>
            <person name="Cai S."/>
            <person name="Center A."/>
            <person name="Chaturverdi K."/>
            <person name="Christophides G.K."/>
            <person name="Chrystal M.A.M."/>
            <person name="Clamp M."/>
            <person name="Cravchik A."/>
            <person name="Curwen V."/>
            <person name="Dana A."/>
            <person name="Delcher A."/>
            <person name="Dew I."/>
            <person name="Evans C.A."/>
            <person name="Flanigan M."/>
            <person name="Grundschober-Freimoser A."/>
            <person name="Friedli L."/>
            <person name="Gu Z."/>
            <person name="Guan P."/>
            <person name="Guigo R."/>
            <person name="Hillenmeyer M.E."/>
            <person name="Hladun S.L."/>
            <person name="Hogan J.R."/>
            <person name="Hong Y.S."/>
            <person name="Hoover J."/>
            <person name="Jaillon O."/>
            <person name="Ke Z."/>
            <person name="Kodira C.D."/>
            <person name="Kokoza E."/>
            <person name="Koutsos A."/>
            <person name="Letunic I."/>
            <person name="Levitsky A.A."/>
            <person name="Liang Y."/>
            <person name="Lin J.-J."/>
            <person name="Lobo N.F."/>
            <person name="Lopez J.R."/>
            <person name="Malek J.A."/>
            <person name="McIntosh T.C."/>
            <person name="Meister S."/>
            <person name="Miller J.R."/>
            <person name="Mobarry C."/>
            <person name="Mongin E."/>
            <person name="Murphy S.D."/>
            <person name="O'Brochta D.A."/>
            <person name="Pfannkoch C."/>
            <person name="Qi R."/>
            <person name="Regier M.A."/>
            <person name="Remington K."/>
            <person name="Shao H."/>
            <person name="Sharakhova M.V."/>
            <person name="Sitter C.D."/>
            <person name="Shetty J."/>
            <person name="Smith T.J."/>
            <person name="Strong R."/>
            <person name="Sun J."/>
            <person name="Thomasova D."/>
            <person name="Ton L.Q."/>
            <person name="Topalis P."/>
            <person name="Tu Z.J."/>
            <person name="Unger M.F."/>
            <person name="Walenz B."/>
            <person name="Wang A.H."/>
            <person name="Wang J."/>
            <person name="Wang M."/>
            <person name="Wang X."/>
            <person name="Woodford K.J."/>
            <person name="Wortman J.R."/>
            <person name="Wu M."/>
            <person name="Yao A."/>
            <person name="Zdobnov E.M."/>
            <person name="Zhang H."/>
            <person name="Zhao Q."/>
            <person name="Zhao S."/>
            <person name="Zhu S.C."/>
            <person name="Zhimulev I."/>
            <person name="Coluzzi M."/>
            <person name="della Torre A."/>
            <person name="Roth C.W."/>
            <person name="Louis C."/>
            <person name="Kalush F."/>
            <person name="Mural R.J."/>
            <person name="Myers E.W."/>
            <person name="Adams M.D."/>
            <person name="Smith H.O."/>
            <person name="Broder S."/>
            <person name="Gardner M.J."/>
            <person name="Fraser C.M."/>
            <person name="Birney E."/>
            <person name="Bork P."/>
            <person name="Brey P.T."/>
            <person name="Venter J.C."/>
            <person name="Weissenbach J."/>
            <person name="Kafatos F.C."/>
            <person name="Collins F.H."/>
            <person name="Hoffman S.L."/>
        </authorList>
    </citation>
    <scope>NUCLEOTIDE SEQUENCE [LARGE SCALE GENOMIC DNA]</scope>
    <source>
        <strain>PEST</strain>
    </source>
</reference>
<comment type="function">
    <text evidence="1">Component of the eukaryotic translation initiation factor 3 (eIF-3) complex, which is involved in protein synthesis of a specialized repertoire of mRNAs and, together with other initiation factors, stimulates binding of mRNA and methionyl-tRNAi to the 40S ribosome. The eIF-3 complex specifically targets and initiates translation of a subset of mRNAs involved in cell proliferation.</text>
</comment>
<comment type="subunit">
    <text evidence="1">Component of the eukaryotic translation initiation factor 3 (eIF-3) complex.</text>
</comment>
<comment type="subcellular location">
    <subcellularLocation>
        <location evidence="1">Cytoplasm</location>
    </subcellularLocation>
</comment>
<comment type="similarity">
    <text evidence="1">Belongs to the eIF-3 subunit I family.</text>
</comment>
<accession>Q7PP77</accession>
<proteinExistence type="inferred from homology"/>
<evidence type="ECO:0000255" key="1">
    <source>
        <dbReference type="HAMAP-Rule" id="MF_03008"/>
    </source>
</evidence>
<organism>
    <name type="scientific">Anopheles gambiae</name>
    <name type="common">African malaria mosquito</name>
    <dbReference type="NCBI Taxonomy" id="7165"/>
    <lineage>
        <taxon>Eukaryota</taxon>
        <taxon>Metazoa</taxon>
        <taxon>Ecdysozoa</taxon>
        <taxon>Arthropoda</taxon>
        <taxon>Hexapoda</taxon>
        <taxon>Insecta</taxon>
        <taxon>Pterygota</taxon>
        <taxon>Neoptera</taxon>
        <taxon>Endopterygota</taxon>
        <taxon>Diptera</taxon>
        <taxon>Nematocera</taxon>
        <taxon>Culicoidea</taxon>
        <taxon>Culicidae</taxon>
        <taxon>Anophelinae</taxon>
        <taxon>Anopheles</taxon>
    </lineage>
</organism>